<sequence length="89" mass="10500">MALTAEEKQEIIKTYATHEGDTGSPEVQVALLTKRIADLTEHLKEHKHDHHSRRGLLLMVGDRRRMLDYLKRVDINRYRSLIERLGLRR</sequence>
<keyword id="KW-1185">Reference proteome</keyword>
<keyword id="KW-0687">Ribonucleoprotein</keyword>
<keyword id="KW-0689">Ribosomal protein</keyword>
<keyword id="KW-0694">RNA-binding</keyword>
<keyword id="KW-0699">rRNA-binding</keyword>
<evidence type="ECO:0000255" key="1">
    <source>
        <dbReference type="HAMAP-Rule" id="MF_01343"/>
    </source>
</evidence>
<evidence type="ECO:0000305" key="2"/>
<reference key="1">
    <citation type="submission" date="2006-12" db="EMBL/GenBank/DDBJ databases">
        <title>Bifidobacterium adolescentis complete genome sequence.</title>
        <authorList>
            <person name="Suzuki T."/>
            <person name="Tsuda Y."/>
            <person name="Kanou N."/>
            <person name="Inoue T."/>
            <person name="Kumazaki K."/>
            <person name="Nagano S."/>
            <person name="Hirai S."/>
            <person name="Tanaka K."/>
            <person name="Watanabe K."/>
        </authorList>
    </citation>
    <scope>NUCLEOTIDE SEQUENCE [LARGE SCALE GENOMIC DNA]</scope>
    <source>
        <strain>ATCC 15703 / DSM 20083 / NCTC 11814 / E194a</strain>
    </source>
</reference>
<gene>
    <name evidence="1" type="primary">rpsO</name>
    <name type="ordered locus">BAD_0259</name>
</gene>
<protein>
    <recommendedName>
        <fullName evidence="1">Small ribosomal subunit protein uS15</fullName>
    </recommendedName>
    <alternativeName>
        <fullName evidence="2">30S ribosomal protein S15</fullName>
    </alternativeName>
</protein>
<accession>A1A007</accession>
<feature type="chain" id="PRO_1000054753" description="Small ribosomal subunit protein uS15">
    <location>
        <begin position="1"/>
        <end position="89"/>
    </location>
</feature>
<organism>
    <name type="scientific">Bifidobacterium adolescentis (strain ATCC 15703 / DSM 20083 / NCTC 11814 / E194a)</name>
    <dbReference type="NCBI Taxonomy" id="367928"/>
    <lineage>
        <taxon>Bacteria</taxon>
        <taxon>Bacillati</taxon>
        <taxon>Actinomycetota</taxon>
        <taxon>Actinomycetes</taxon>
        <taxon>Bifidobacteriales</taxon>
        <taxon>Bifidobacteriaceae</taxon>
        <taxon>Bifidobacterium</taxon>
    </lineage>
</organism>
<dbReference type="EMBL" id="AP009256">
    <property type="protein sequence ID" value="BAF39040.1"/>
    <property type="molecule type" value="Genomic_DNA"/>
</dbReference>
<dbReference type="RefSeq" id="WP_003807806.1">
    <property type="nucleotide sequence ID" value="NZ_CAXVNC010000001.1"/>
</dbReference>
<dbReference type="SMR" id="A1A007"/>
<dbReference type="STRING" id="367928.BAD_0259"/>
<dbReference type="PaxDb" id="1680-BADO_0267"/>
<dbReference type="GeneID" id="97501971"/>
<dbReference type="KEGG" id="bad:BAD_0259"/>
<dbReference type="HOGENOM" id="CLU_148518_0_0_11"/>
<dbReference type="Proteomes" id="UP000008702">
    <property type="component" value="Chromosome"/>
</dbReference>
<dbReference type="GO" id="GO:0022627">
    <property type="term" value="C:cytosolic small ribosomal subunit"/>
    <property type="evidence" value="ECO:0007669"/>
    <property type="project" value="TreeGrafter"/>
</dbReference>
<dbReference type="GO" id="GO:0019843">
    <property type="term" value="F:rRNA binding"/>
    <property type="evidence" value="ECO:0007669"/>
    <property type="project" value="UniProtKB-UniRule"/>
</dbReference>
<dbReference type="GO" id="GO:0003735">
    <property type="term" value="F:structural constituent of ribosome"/>
    <property type="evidence" value="ECO:0007669"/>
    <property type="project" value="InterPro"/>
</dbReference>
<dbReference type="GO" id="GO:0006412">
    <property type="term" value="P:translation"/>
    <property type="evidence" value="ECO:0007669"/>
    <property type="project" value="UniProtKB-UniRule"/>
</dbReference>
<dbReference type="CDD" id="cd00353">
    <property type="entry name" value="Ribosomal_S15p_S13e"/>
    <property type="match status" value="1"/>
</dbReference>
<dbReference type="FunFam" id="1.10.287.10:FF:000002">
    <property type="entry name" value="30S ribosomal protein S15"/>
    <property type="match status" value="1"/>
</dbReference>
<dbReference type="Gene3D" id="6.10.250.3130">
    <property type="match status" value="1"/>
</dbReference>
<dbReference type="Gene3D" id="1.10.287.10">
    <property type="entry name" value="S15/NS1, RNA-binding"/>
    <property type="match status" value="1"/>
</dbReference>
<dbReference type="HAMAP" id="MF_01343_B">
    <property type="entry name" value="Ribosomal_uS15_B"/>
    <property type="match status" value="1"/>
</dbReference>
<dbReference type="InterPro" id="IPR000589">
    <property type="entry name" value="Ribosomal_uS15"/>
</dbReference>
<dbReference type="InterPro" id="IPR005290">
    <property type="entry name" value="Ribosomal_uS15_bac-type"/>
</dbReference>
<dbReference type="InterPro" id="IPR009068">
    <property type="entry name" value="uS15_NS1_RNA-bd_sf"/>
</dbReference>
<dbReference type="NCBIfam" id="TIGR00952">
    <property type="entry name" value="S15_bact"/>
    <property type="match status" value="1"/>
</dbReference>
<dbReference type="PANTHER" id="PTHR23321">
    <property type="entry name" value="RIBOSOMAL PROTEIN S15, BACTERIAL AND ORGANELLAR"/>
    <property type="match status" value="1"/>
</dbReference>
<dbReference type="PANTHER" id="PTHR23321:SF26">
    <property type="entry name" value="SMALL RIBOSOMAL SUBUNIT PROTEIN US15M"/>
    <property type="match status" value="1"/>
</dbReference>
<dbReference type="Pfam" id="PF00312">
    <property type="entry name" value="Ribosomal_S15"/>
    <property type="match status" value="1"/>
</dbReference>
<dbReference type="SMART" id="SM01387">
    <property type="entry name" value="Ribosomal_S15"/>
    <property type="match status" value="1"/>
</dbReference>
<dbReference type="SUPFAM" id="SSF47060">
    <property type="entry name" value="S15/NS1 RNA-binding domain"/>
    <property type="match status" value="1"/>
</dbReference>
<dbReference type="PROSITE" id="PS00362">
    <property type="entry name" value="RIBOSOMAL_S15"/>
    <property type="match status" value="1"/>
</dbReference>
<name>RS15_BIFAA</name>
<proteinExistence type="inferred from homology"/>
<comment type="function">
    <text evidence="1">One of the primary rRNA binding proteins, it binds directly to 16S rRNA where it helps nucleate assembly of the platform of the 30S subunit by binding and bridging several RNA helices of the 16S rRNA.</text>
</comment>
<comment type="function">
    <text evidence="1">Forms an intersubunit bridge (bridge B4) with the 23S rRNA of the 50S subunit in the ribosome.</text>
</comment>
<comment type="subunit">
    <text evidence="1">Part of the 30S ribosomal subunit. Forms a bridge to the 50S subunit in the 70S ribosome, contacting the 23S rRNA.</text>
</comment>
<comment type="similarity">
    <text evidence="1">Belongs to the universal ribosomal protein uS15 family.</text>
</comment>